<reference key="1">
    <citation type="journal article" date="2004" name="Nat. Genet.">
        <title>Complete sequencing and characterization of 21,243 full-length human cDNAs.</title>
        <authorList>
            <person name="Ota T."/>
            <person name="Suzuki Y."/>
            <person name="Nishikawa T."/>
            <person name="Otsuki T."/>
            <person name="Sugiyama T."/>
            <person name="Irie R."/>
            <person name="Wakamatsu A."/>
            <person name="Hayashi K."/>
            <person name="Sato H."/>
            <person name="Nagai K."/>
            <person name="Kimura K."/>
            <person name="Makita H."/>
            <person name="Sekine M."/>
            <person name="Obayashi M."/>
            <person name="Nishi T."/>
            <person name="Shibahara T."/>
            <person name="Tanaka T."/>
            <person name="Ishii S."/>
            <person name="Yamamoto J."/>
            <person name="Saito K."/>
            <person name="Kawai Y."/>
            <person name="Isono Y."/>
            <person name="Nakamura Y."/>
            <person name="Nagahari K."/>
            <person name="Murakami K."/>
            <person name="Yasuda T."/>
            <person name="Iwayanagi T."/>
            <person name="Wagatsuma M."/>
            <person name="Shiratori A."/>
            <person name="Sudo H."/>
            <person name="Hosoiri T."/>
            <person name="Kaku Y."/>
            <person name="Kodaira H."/>
            <person name="Kondo H."/>
            <person name="Sugawara M."/>
            <person name="Takahashi M."/>
            <person name="Kanda K."/>
            <person name="Yokoi T."/>
            <person name="Furuya T."/>
            <person name="Kikkawa E."/>
            <person name="Omura Y."/>
            <person name="Abe K."/>
            <person name="Kamihara K."/>
            <person name="Katsuta N."/>
            <person name="Sato K."/>
            <person name="Tanikawa M."/>
            <person name="Yamazaki M."/>
            <person name="Ninomiya K."/>
            <person name="Ishibashi T."/>
            <person name="Yamashita H."/>
            <person name="Murakawa K."/>
            <person name="Fujimori K."/>
            <person name="Tanai H."/>
            <person name="Kimata M."/>
            <person name="Watanabe M."/>
            <person name="Hiraoka S."/>
            <person name="Chiba Y."/>
            <person name="Ishida S."/>
            <person name="Ono Y."/>
            <person name="Takiguchi S."/>
            <person name="Watanabe S."/>
            <person name="Yosida M."/>
            <person name="Hotuta T."/>
            <person name="Kusano J."/>
            <person name="Kanehori K."/>
            <person name="Takahashi-Fujii A."/>
            <person name="Hara H."/>
            <person name="Tanase T.-O."/>
            <person name="Nomura Y."/>
            <person name="Togiya S."/>
            <person name="Komai F."/>
            <person name="Hara R."/>
            <person name="Takeuchi K."/>
            <person name="Arita M."/>
            <person name="Imose N."/>
            <person name="Musashino K."/>
            <person name="Yuuki H."/>
            <person name="Oshima A."/>
            <person name="Sasaki N."/>
            <person name="Aotsuka S."/>
            <person name="Yoshikawa Y."/>
            <person name="Matsunawa H."/>
            <person name="Ichihara T."/>
            <person name="Shiohata N."/>
            <person name="Sano S."/>
            <person name="Moriya S."/>
            <person name="Momiyama H."/>
            <person name="Satoh N."/>
            <person name="Takami S."/>
            <person name="Terashima Y."/>
            <person name="Suzuki O."/>
            <person name="Nakagawa S."/>
            <person name="Senoh A."/>
            <person name="Mizoguchi H."/>
            <person name="Goto Y."/>
            <person name="Shimizu F."/>
            <person name="Wakebe H."/>
            <person name="Hishigaki H."/>
            <person name="Watanabe T."/>
            <person name="Sugiyama A."/>
            <person name="Takemoto M."/>
            <person name="Kawakami B."/>
            <person name="Yamazaki M."/>
            <person name="Watanabe K."/>
            <person name="Kumagai A."/>
            <person name="Itakura S."/>
            <person name="Fukuzumi Y."/>
            <person name="Fujimori Y."/>
            <person name="Komiyama M."/>
            <person name="Tashiro H."/>
            <person name="Tanigami A."/>
            <person name="Fujiwara T."/>
            <person name="Ono T."/>
            <person name="Yamada K."/>
            <person name="Fujii Y."/>
            <person name="Ozaki K."/>
            <person name="Hirao M."/>
            <person name="Ohmori Y."/>
            <person name="Kawabata A."/>
            <person name="Hikiji T."/>
            <person name="Kobatake N."/>
            <person name="Inagaki H."/>
            <person name="Ikema Y."/>
            <person name="Okamoto S."/>
            <person name="Okitani R."/>
            <person name="Kawakami T."/>
            <person name="Noguchi S."/>
            <person name="Itoh T."/>
            <person name="Shigeta K."/>
            <person name="Senba T."/>
            <person name="Matsumura K."/>
            <person name="Nakajima Y."/>
            <person name="Mizuno T."/>
            <person name="Morinaga M."/>
            <person name="Sasaki M."/>
            <person name="Togashi T."/>
            <person name="Oyama M."/>
            <person name="Hata H."/>
            <person name="Watanabe M."/>
            <person name="Komatsu T."/>
            <person name="Mizushima-Sugano J."/>
            <person name="Satoh T."/>
            <person name="Shirai Y."/>
            <person name="Takahashi Y."/>
            <person name="Nakagawa K."/>
            <person name="Okumura K."/>
            <person name="Nagase T."/>
            <person name="Nomura N."/>
            <person name="Kikuchi H."/>
            <person name="Masuho Y."/>
            <person name="Yamashita R."/>
            <person name="Nakai K."/>
            <person name="Yada T."/>
            <person name="Nakamura Y."/>
            <person name="Ohara O."/>
            <person name="Isogai T."/>
            <person name="Sugano S."/>
        </authorList>
    </citation>
    <scope>NUCLEOTIDE SEQUENCE [LARGE SCALE MRNA] (ISOFORM 1)</scope>
    <source>
        <tissue>Epithelium</tissue>
    </source>
</reference>
<reference key="2">
    <citation type="journal article" date="2006" name="Nature">
        <title>DNA sequence of human chromosome 17 and analysis of rearrangement in the human lineage.</title>
        <authorList>
            <person name="Zody M.C."/>
            <person name="Garber M."/>
            <person name="Adams D.J."/>
            <person name="Sharpe T."/>
            <person name="Harrow J."/>
            <person name="Lupski J.R."/>
            <person name="Nicholson C."/>
            <person name="Searle S.M."/>
            <person name="Wilming L."/>
            <person name="Young S.K."/>
            <person name="Abouelleil A."/>
            <person name="Allen N.R."/>
            <person name="Bi W."/>
            <person name="Bloom T."/>
            <person name="Borowsky M.L."/>
            <person name="Bugalter B.E."/>
            <person name="Butler J."/>
            <person name="Chang J.L."/>
            <person name="Chen C.-K."/>
            <person name="Cook A."/>
            <person name="Corum B."/>
            <person name="Cuomo C.A."/>
            <person name="de Jong P.J."/>
            <person name="DeCaprio D."/>
            <person name="Dewar K."/>
            <person name="FitzGerald M."/>
            <person name="Gilbert J."/>
            <person name="Gibson R."/>
            <person name="Gnerre S."/>
            <person name="Goldstein S."/>
            <person name="Grafham D.V."/>
            <person name="Grocock R."/>
            <person name="Hafez N."/>
            <person name="Hagopian D.S."/>
            <person name="Hart E."/>
            <person name="Norman C.H."/>
            <person name="Humphray S."/>
            <person name="Jaffe D.B."/>
            <person name="Jones M."/>
            <person name="Kamal M."/>
            <person name="Khodiyar V.K."/>
            <person name="LaButti K."/>
            <person name="Laird G."/>
            <person name="Lehoczky J."/>
            <person name="Liu X."/>
            <person name="Lokyitsang T."/>
            <person name="Loveland J."/>
            <person name="Lui A."/>
            <person name="Macdonald P."/>
            <person name="Major J.E."/>
            <person name="Matthews L."/>
            <person name="Mauceli E."/>
            <person name="McCarroll S.A."/>
            <person name="Mihalev A.H."/>
            <person name="Mudge J."/>
            <person name="Nguyen C."/>
            <person name="Nicol R."/>
            <person name="O'Leary S.B."/>
            <person name="Osoegawa K."/>
            <person name="Schwartz D.C."/>
            <person name="Shaw-Smith C."/>
            <person name="Stankiewicz P."/>
            <person name="Steward C."/>
            <person name="Swarbreck D."/>
            <person name="Venkataraman V."/>
            <person name="Whittaker C.A."/>
            <person name="Yang X."/>
            <person name="Zimmer A.R."/>
            <person name="Bradley A."/>
            <person name="Hubbard T."/>
            <person name="Birren B.W."/>
            <person name="Rogers J."/>
            <person name="Lander E.S."/>
            <person name="Nusbaum C."/>
        </authorList>
    </citation>
    <scope>NUCLEOTIDE SEQUENCE [LARGE SCALE GENOMIC DNA]</scope>
</reference>
<reference key="3">
    <citation type="journal article" date="2004" name="Genome Res.">
        <title>The status, quality, and expansion of the NIH full-length cDNA project: the Mammalian Gene Collection (MGC).</title>
        <authorList>
            <consortium name="The MGC Project Team"/>
        </authorList>
    </citation>
    <scope>NUCLEOTIDE SEQUENCE [LARGE SCALE MRNA] (ISOFORM 2)</scope>
    <scope>VARIANT ARG-272</scope>
    <source>
        <tissue>Placenta</tissue>
        <tissue>Skin</tissue>
    </source>
</reference>
<reference key="4">
    <citation type="journal article" date="2011" name="BMC Syst. Biol.">
        <title>Initial characterization of the human central proteome.</title>
        <authorList>
            <person name="Burkard T.R."/>
            <person name="Planyavsky M."/>
            <person name="Kaupe I."/>
            <person name="Breitwieser F.P."/>
            <person name="Buerckstuemmer T."/>
            <person name="Bennett K.L."/>
            <person name="Superti-Furga G."/>
            <person name="Colinge J."/>
        </authorList>
    </citation>
    <scope>IDENTIFICATION BY MASS SPECTROMETRY [LARGE SCALE ANALYSIS]</scope>
</reference>
<organism>
    <name type="scientific">Homo sapiens</name>
    <name type="common">Human</name>
    <dbReference type="NCBI Taxonomy" id="9606"/>
    <lineage>
        <taxon>Eukaryota</taxon>
        <taxon>Metazoa</taxon>
        <taxon>Chordata</taxon>
        <taxon>Craniata</taxon>
        <taxon>Vertebrata</taxon>
        <taxon>Euteleostomi</taxon>
        <taxon>Mammalia</taxon>
        <taxon>Eutheria</taxon>
        <taxon>Euarchontoglires</taxon>
        <taxon>Primates</taxon>
        <taxon>Haplorrhini</taxon>
        <taxon>Catarrhini</taxon>
        <taxon>Hominidae</taxon>
        <taxon>Homo</taxon>
    </lineage>
</organism>
<name>OGFD3_HUMAN</name>
<gene>
    <name type="primary">OGFOD3</name>
    <name type="synonym">C17orf101</name>
</gene>
<keyword id="KW-0025">Alternative splicing</keyword>
<keyword id="KW-0223">Dioxygenase</keyword>
<keyword id="KW-0325">Glycoprotein</keyword>
<keyword id="KW-0408">Iron</keyword>
<keyword id="KW-0472">Membrane</keyword>
<keyword id="KW-0479">Metal-binding</keyword>
<keyword id="KW-0560">Oxidoreductase</keyword>
<keyword id="KW-1267">Proteomics identification</keyword>
<keyword id="KW-1185">Reference proteome</keyword>
<keyword id="KW-0735">Signal-anchor</keyword>
<keyword id="KW-0812">Transmembrane</keyword>
<keyword id="KW-1133">Transmembrane helix</keyword>
<keyword id="KW-0847">Vitamin C</keyword>
<dbReference type="EC" id="1.14.11.-"/>
<dbReference type="EMBL" id="AK025875">
    <property type="protein sequence ID" value="BAB15267.1"/>
    <property type="molecule type" value="mRNA"/>
</dbReference>
<dbReference type="EMBL" id="AC132938">
    <property type="status" value="NOT_ANNOTATED_CDS"/>
    <property type="molecule type" value="Genomic_DNA"/>
</dbReference>
<dbReference type="EMBL" id="BC008897">
    <property type="protein sequence ID" value="AAH08897.1"/>
    <property type="molecule type" value="mRNA"/>
</dbReference>
<dbReference type="EMBL" id="BC023602">
    <property type="protein sequence ID" value="AAH23602.1"/>
    <property type="molecule type" value="mRNA"/>
</dbReference>
<dbReference type="CCDS" id="CCDS11811.1">
    <molecule id="Q6PK18-1"/>
</dbReference>
<dbReference type="CCDS" id="CCDS11812.1">
    <molecule id="Q6PK18-2"/>
</dbReference>
<dbReference type="RefSeq" id="NP_078924.1">
    <molecule id="Q6PK18-1"/>
    <property type="nucleotide sequence ID" value="NM_024648.3"/>
</dbReference>
<dbReference type="RefSeq" id="NP_787098.3">
    <molecule id="Q6PK18-2"/>
    <property type="nucleotide sequence ID" value="NM_175902.4"/>
</dbReference>
<dbReference type="RefSeq" id="XP_047292715.1">
    <molecule id="Q6PK18-1"/>
    <property type="nucleotide sequence ID" value="XM_047436759.1"/>
</dbReference>
<dbReference type="RefSeq" id="XP_054173205.1">
    <molecule id="Q6PK18-1"/>
    <property type="nucleotide sequence ID" value="XM_054317230.1"/>
</dbReference>
<dbReference type="SMR" id="Q6PK18"/>
<dbReference type="BioGRID" id="122821">
    <property type="interactions" value="36"/>
</dbReference>
<dbReference type="FunCoup" id="Q6PK18">
    <property type="interactions" value="191"/>
</dbReference>
<dbReference type="IntAct" id="Q6PK18">
    <property type="interactions" value="22"/>
</dbReference>
<dbReference type="STRING" id="9606.ENSP00000330075"/>
<dbReference type="GlyConnect" id="981">
    <property type="glycosylation" value="3 N-Linked glycans (2 sites)"/>
</dbReference>
<dbReference type="GlyCosmos" id="Q6PK18">
    <property type="glycosylation" value="2 sites, 3 glycans"/>
</dbReference>
<dbReference type="GlyGen" id="Q6PK18">
    <property type="glycosylation" value="3 sites, 9 N-linked glycans (2 sites), 1 O-linked glycan (1 site)"/>
</dbReference>
<dbReference type="iPTMnet" id="Q6PK18"/>
<dbReference type="PhosphoSitePlus" id="Q6PK18"/>
<dbReference type="BioMuta" id="OGFOD3"/>
<dbReference type="DMDM" id="172046153"/>
<dbReference type="jPOST" id="Q6PK18"/>
<dbReference type="MassIVE" id="Q6PK18"/>
<dbReference type="PaxDb" id="9606-ENSP00000330075"/>
<dbReference type="PeptideAtlas" id="Q6PK18"/>
<dbReference type="ProteomicsDB" id="67230">
    <molecule id="Q6PK18-1"/>
</dbReference>
<dbReference type="ProteomicsDB" id="67231">
    <molecule id="Q6PK18-2"/>
</dbReference>
<dbReference type="Pumba" id="Q6PK18"/>
<dbReference type="Antibodypedia" id="63655">
    <property type="antibodies" value="15 antibodies from 8 providers"/>
</dbReference>
<dbReference type="DNASU" id="79701"/>
<dbReference type="Ensembl" id="ENST00000313056.10">
    <molecule id="Q6PK18-1"/>
    <property type="protein sequence ID" value="ENSP00000320116.5"/>
    <property type="gene ID" value="ENSG00000181396.13"/>
</dbReference>
<dbReference type="Ensembl" id="ENST00000329197.9">
    <molecule id="Q6PK18-2"/>
    <property type="protein sequence ID" value="ENSP00000330075.5"/>
    <property type="gene ID" value="ENSG00000181396.13"/>
</dbReference>
<dbReference type="GeneID" id="79701"/>
<dbReference type="KEGG" id="hsa:79701"/>
<dbReference type="MANE-Select" id="ENST00000313056.10">
    <property type="protein sequence ID" value="ENSP00000320116.5"/>
    <property type="RefSeq nucleotide sequence ID" value="NM_024648.3"/>
    <property type="RefSeq protein sequence ID" value="NP_078924.1"/>
</dbReference>
<dbReference type="UCSC" id="uc002ket.3">
    <molecule id="Q6PK18-1"/>
    <property type="organism name" value="human"/>
</dbReference>
<dbReference type="AGR" id="HGNC:26174"/>
<dbReference type="CTD" id="79701"/>
<dbReference type="DisGeNET" id="79701"/>
<dbReference type="GeneCards" id="OGFOD3"/>
<dbReference type="HGNC" id="HGNC:26174">
    <property type="gene designation" value="OGFOD3"/>
</dbReference>
<dbReference type="HPA" id="ENSG00000181396">
    <property type="expression patterns" value="Low tissue specificity"/>
</dbReference>
<dbReference type="neXtProt" id="NX_Q6PK18"/>
<dbReference type="OpenTargets" id="ENSG00000181396"/>
<dbReference type="PharmGKB" id="PA164716907"/>
<dbReference type="VEuPathDB" id="HostDB:ENSG00000181396"/>
<dbReference type="eggNOG" id="ENOG502QR2P">
    <property type="taxonomic scope" value="Eukaryota"/>
</dbReference>
<dbReference type="GeneTree" id="ENSGT00390000005895"/>
<dbReference type="HOGENOM" id="CLU_042482_0_0_1"/>
<dbReference type="InParanoid" id="Q6PK18"/>
<dbReference type="OMA" id="YESFHYT"/>
<dbReference type="OrthoDB" id="427071at2759"/>
<dbReference type="PAN-GO" id="Q6PK18">
    <property type="GO annotations" value="0 GO annotations based on evolutionary models"/>
</dbReference>
<dbReference type="PhylomeDB" id="Q6PK18"/>
<dbReference type="TreeFam" id="TF329031"/>
<dbReference type="PathwayCommons" id="Q6PK18"/>
<dbReference type="SignaLink" id="Q6PK18"/>
<dbReference type="BioGRID-ORCS" id="79701">
    <property type="hits" value="17 hits in 1155 CRISPR screens"/>
</dbReference>
<dbReference type="ChiTaRS" id="OGFOD3">
    <property type="organism name" value="human"/>
</dbReference>
<dbReference type="GenomeRNAi" id="79701"/>
<dbReference type="Pharos" id="Q6PK18">
    <property type="development level" value="Tdark"/>
</dbReference>
<dbReference type="PRO" id="PR:Q6PK18"/>
<dbReference type="Proteomes" id="UP000005640">
    <property type="component" value="Chromosome 17"/>
</dbReference>
<dbReference type="RNAct" id="Q6PK18">
    <property type="molecule type" value="protein"/>
</dbReference>
<dbReference type="Bgee" id="ENSG00000181396">
    <property type="expression patterns" value="Expressed in pancreatic ductal cell and 187 other cell types or tissues"/>
</dbReference>
<dbReference type="ExpressionAtlas" id="Q6PK18">
    <property type="expression patterns" value="baseline and differential"/>
</dbReference>
<dbReference type="GO" id="GO:0016020">
    <property type="term" value="C:membrane"/>
    <property type="evidence" value="ECO:0007005"/>
    <property type="project" value="UniProtKB"/>
</dbReference>
<dbReference type="GO" id="GO:0051213">
    <property type="term" value="F:dioxygenase activity"/>
    <property type="evidence" value="ECO:0007669"/>
    <property type="project" value="UniProtKB-KW"/>
</dbReference>
<dbReference type="GO" id="GO:0005506">
    <property type="term" value="F:iron ion binding"/>
    <property type="evidence" value="ECO:0007669"/>
    <property type="project" value="InterPro"/>
</dbReference>
<dbReference type="GO" id="GO:0031418">
    <property type="term" value="F:L-ascorbic acid binding"/>
    <property type="evidence" value="ECO:0007669"/>
    <property type="project" value="UniProtKB-KW"/>
</dbReference>
<dbReference type="GO" id="GO:0016705">
    <property type="term" value="F:oxidoreductase activity, acting on paired donors, with incorporation or reduction of molecular oxygen"/>
    <property type="evidence" value="ECO:0007669"/>
    <property type="project" value="InterPro"/>
</dbReference>
<dbReference type="FunFam" id="2.60.120.620:FF:000019">
    <property type="entry name" value="2-oxoglutarate and iron-dependent oxygenase domain-containing protein 3"/>
    <property type="match status" value="1"/>
</dbReference>
<dbReference type="Gene3D" id="2.60.120.620">
    <property type="entry name" value="q2cbj1_9rhob like domain"/>
    <property type="match status" value="1"/>
</dbReference>
<dbReference type="InterPro" id="IPR039210">
    <property type="entry name" value="OGFOD3"/>
</dbReference>
<dbReference type="InterPro" id="IPR005123">
    <property type="entry name" value="Oxoglu/Fe-dep_dioxygenase_dom"/>
</dbReference>
<dbReference type="InterPro" id="IPR006620">
    <property type="entry name" value="Pro_4_hyd_alph"/>
</dbReference>
<dbReference type="InterPro" id="IPR044862">
    <property type="entry name" value="Pro_4_hyd_alph_FE2OG_OXY"/>
</dbReference>
<dbReference type="PANTHER" id="PTHR14650:SF1">
    <property type="entry name" value="2-OXOGLUTARATE AND IRON-DEPENDENT OXYGENASE DOMAIN-CONTAINING PROTEIN 3"/>
    <property type="match status" value="1"/>
</dbReference>
<dbReference type="PANTHER" id="PTHR14650">
    <property type="entry name" value="PROLYL HYDROXYLASE-RELATED"/>
    <property type="match status" value="1"/>
</dbReference>
<dbReference type="Pfam" id="PF13640">
    <property type="entry name" value="2OG-FeII_Oxy_3"/>
    <property type="match status" value="1"/>
</dbReference>
<dbReference type="SMART" id="SM00702">
    <property type="entry name" value="P4Hc"/>
    <property type="match status" value="1"/>
</dbReference>
<dbReference type="PROSITE" id="PS51471">
    <property type="entry name" value="FE2OG_OXY"/>
    <property type="match status" value="1"/>
</dbReference>
<feature type="chain" id="PRO_0000325885" description="2-oxoglutarate and iron-dependent oxygenase domain-containing protein 3">
    <location>
        <begin position="1"/>
        <end position="319"/>
    </location>
</feature>
<feature type="topological domain" description="Cytoplasmic" evidence="2">
    <location>
        <begin position="1"/>
        <end position="42"/>
    </location>
</feature>
<feature type="transmembrane region" description="Helical; Signal-anchor for type II membrane protein" evidence="2">
    <location>
        <begin position="43"/>
        <end position="65"/>
    </location>
</feature>
<feature type="topological domain" description="Lumenal" evidence="2">
    <location>
        <begin position="66"/>
        <end position="319"/>
    </location>
</feature>
<feature type="domain" description="Fe2OG dioxygenase" evidence="3">
    <location>
        <begin position="207"/>
        <end position="309"/>
    </location>
</feature>
<feature type="region of interest" description="Disordered" evidence="4">
    <location>
        <begin position="1"/>
        <end position="34"/>
    </location>
</feature>
<feature type="compositionally biased region" description="Basic and acidic residues" evidence="4">
    <location>
        <begin position="18"/>
        <end position="34"/>
    </location>
</feature>
<feature type="active site" evidence="2">
    <location>
        <position position="298"/>
    </location>
</feature>
<feature type="binding site" evidence="3">
    <location>
        <position position="230"/>
    </location>
    <ligand>
        <name>Fe cation</name>
        <dbReference type="ChEBI" id="CHEBI:24875"/>
    </ligand>
</feature>
<feature type="binding site" evidence="3">
    <location>
        <position position="232"/>
    </location>
    <ligand>
        <name>Fe cation</name>
        <dbReference type="ChEBI" id="CHEBI:24875"/>
    </ligand>
</feature>
<feature type="binding site" evidence="3">
    <location>
        <position position="288"/>
    </location>
    <ligand>
        <name>Fe cation</name>
        <dbReference type="ChEBI" id="CHEBI:24875"/>
    </ligand>
</feature>
<feature type="binding site" evidence="3">
    <location>
        <position position="298"/>
    </location>
    <ligand>
        <name>2-oxoglutarate</name>
        <dbReference type="ChEBI" id="CHEBI:16810"/>
    </ligand>
</feature>
<feature type="glycosylation site" description="N-linked (GlcNAc...) asparagine" evidence="2">
    <location>
        <position position="215"/>
    </location>
</feature>
<feature type="splice variant" id="VSP_032462" description="In isoform 2." evidence="6">
    <original>RVSFFTSGSENLHRVEKVHWGTRYAITIAFSCNPDHGIEDPAFP</original>
    <variation>CFCFRMMSCGFQEVNGPRASEAAGAKAGVRCPPGTHHPPERGETHAILEAESIAYC</variation>
    <location>
        <begin position="276"/>
        <end position="319"/>
    </location>
</feature>
<feature type="sequence variant" id="VAR_039948" description="In dbSNP:rs8072110.">
    <original>D</original>
    <variation>E</variation>
    <location>
        <position position="67"/>
    </location>
</feature>
<feature type="sequence variant" id="VAR_039949" description="In dbSNP:rs17852152." evidence="5">
    <original>P</original>
    <variation>R</variation>
    <location>
        <position position="272"/>
    </location>
</feature>
<feature type="sequence conflict" description="In Ref. 3; AAH08897." evidence="7" ref="3">
    <original>P</original>
    <variation>S</variation>
    <location sequence="Q6PK18-2">
        <position position="314"/>
    </location>
</feature>
<evidence type="ECO:0000250" key="1"/>
<evidence type="ECO:0000255" key="2"/>
<evidence type="ECO:0000255" key="3">
    <source>
        <dbReference type="PROSITE-ProRule" id="PRU00805"/>
    </source>
</evidence>
<evidence type="ECO:0000256" key="4">
    <source>
        <dbReference type="SAM" id="MobiDB-lite"/>
    </source>
</evidence>
<evidence type="ECO:0000269" key="5">
    <source>
    </source>
</evidence>
<evidence type="ECO:0000303" key="6">
    <source>
    </source>
</evidence>
<evidence type="ECO:0000305" key="7"/>
<proteinExistence type="evidence at protein level"/>
<sequence length="319" mass="35646">MAPQRRAATKAPEGNGAAERRNRSSTKKDRAPREVQRLWQRPWLRTAGLGAGFVLTALLLWSSLGADDGVAEVLARRGEVVAGRFIEVPCSEDYDSHRRFEGCTPRKCGRGVTDVVITREEAERIRSVAEKGLSLGGSDGGASILDLHSGALSVGKHFVNLYRYFGDKIQNIFSEEDFRLYREVRQKVQLTIAEAFGISASSLHLTKPTFFSRINSTEARTAHDEYWHAHVDKVTYGSFDYTSLLYLSNYLEDFGGGRFMFMEEGANKTVEPRAGRVSFFTSGSENLHRVEKVHWGTRYAITIAFSCNPDHGIEDPAFP</sequence>
<comment type="cofactor">
    <cofactor evidence="3">
        <name>Fe(2+)</name>
        <dbReference type="ChEBI" id="CHEBI:29033"/>
    </cofactor>
    <text evidence="3">Binds 1 Fe(2+) ion per subunit.</text>
</comment>
<comment type="cofactor">
    <cofactor evidence="1">
        <name>L-ascorbate</name>
        <dbReference type="ChEBI" id="CHEBI:38290"/>
    </cofactor>
</comment>
<comment type="subcellular location">
    <subcellularLocation>
        <location evidence="7">Membrane</location>
        <topology evidence="7">Single-pass type II membrane protein</topology>
    </subcellularLocation>
</comment>
<comment type="alternative products">
    <event type="alternative splicing"/>
    <isoform>
        <id>Q6PK18-1</id>
        <name>1</name>
        <sequence type="displayed"/>
    </isoform>
    <isoform>
        <id>Q6PK18-2</id>
        <name>2</name>
        <sequence type="described" ref="VSP_032462"/>
    </isoform>
</comment>
<comment type="similarity">
    <text evidence="7">Belongs to the OGFOD3 family.</text>
</comment>
<accession>Q6PK18</accession>
<accession>C9JDC8</accession>
<accession>Q8IZ37</accession>
<accession>Q9H6J2</accession>
<protein>
    <recommendedName>
        <fullName>2-oxoglutarate and iron-dependent oxygenase domain-containing protein 3</fullName>
        <ecNumber>1.14.11.-</ecNumber>
    </recommendedName>
</protein>